<protein>
    <recommendedName>
        <fullName evidence="1">Small ribosomal subunit protein uS2</fullName>
    </recommendedName>
    <alternativeName>
        <fullName evidence="2">30S ribosomal protein S2</fullName>
    </alternativeName>
</protein>
<dbReference type="EMBL" id="CP000937">
    <property type="protein sequence ID" value="ABZ86817.1"/>
    <property type="status" value="ALT_INIT"/>
    <property type="molecule type" value="Genomic_DNA"/>
</dbReference>
<dbReference type="SMR" id="B0U101"/>
<dbReference type="KEGG" id="fph:Fphi_0598"/>
<dbReference type="eggNOG" id="COG0052">
    <property type="taxonomic scope" value="Bacteria"/>
</dbReference>
<dbReference type="HOGENOM" id="CLU_040318_1_2_6"/>
<dbReference type="GO" id="GO:0022627">
    <property type="term" value="C:cytosolic small ribosomal subunit"/>
    <property type="evidence" value="ECO:0007669"/>
    <property type="project" value="TreeGrafter"/>
</dbReference>
<dbReference type="GO" id="GO:0003735">
    <property type="term" value="F:structural constituent of ribosome"/>
    <property type="evidence" value="ECO:0007669"/>
    <property type="project" value="InterPro"/>
</dbReference>
<dbReference type="GO" id="GO:0006412">
    <property type="term" value="P:translation"/>
    <property type="evidence" value="ECO:0007669"/>
    <property type="project" value="UniProtKB-UniRule"/>
</dbReference>
<dbReference type="CDD" id="cd01425">
    <property type="entry name" value="RPS2"/>
    <property type="match status" value="1"/>
</dbReference>
<dbReference type="FunFam" id="1.10.287.610:FF:000001">
    <property type="entry name" value="30S ribosomal protein S2"/>
    <property type="match status" value="1"/>
</dbReference>
<dbReference type="Gene3D" id="3.40.50.10490">
    <property type="entry name" value="Glucose-6-phosphate isomerase like protein, domain 1"/>
    <property type="match status" value="1"/>
</dbReference>
<dbReference type="Gene3D" id="1.10.287.610">
    <property type="entry name" value="Helix hairpin bin"/>
    <property type="match status" value="1"/>
</dbReference>
<dbReference type="HAMAP" id="MF_00291_B">
    <property type="entry name" value="Ribosomal_uS2_B"/>
    <property type="match status" value="1"/>
</dbReference>
<dbReference type="InterPro" id="IPR001865">
    <property type="entry name" value="Ribosomal_uS2"/>
</dbReference>
<dbReference type="InterPro" id="IPR005706">
    <property type="entry name" value="Ribosomal_uS2_bac/mit/plastid"/>
</dbReference>
<dbReference type="InterPro" id="IPR018130">
    <property type="entry name" value="Ribosomal_uS2_CS"/>
</dbReference>
<dbReference type="InterPro" id="IPR023591">
    <property type="entry name" value="Ribosomal_uS2_flav_dom_sf"/>
</dbReference>
<dbReference type="NCBIfam" id="TIGR01011">
    <property type="entry name" value="rpsB_bact"/>
    <property type="match status" value="1"/>
</dbReference>
<dbReference type="PANTHER" id="PTHR12534">
    <property type="entry name" value="30S RIBOSOMAL PROTEIN S2 PROKARYOTIC AND ORGANELLAR"/>
    <property type="match status" value="1"/>
</dbReference>
<dbReference type="PANTHER" id="PTHR12534:SF0">
    <property type="entry name" value="SMALL RIBOSOMAL SUBUNIT PROTEIN US2M"/>
    <property type="match status" value="1"/>
</dbReference>
<dbReference type="Pfam" id="PF00318">
    <property type="entry name" value="Ribosomal_S2"/>
    <property type="match status" value="1"/>
</dbReference>
<dbReference type="PRINTS" id="PR00395">
    <property type="entry name" value="RIBOSOMALS2"/>
</dbReference>
<dbReference type="SUPFAM" id="SSF52313">
    <property type="entry name" value="Ribosomal protein S2"/>
    <property type="match status" value="1"/>
</dbReference>
<dbReference type="PROSITE" id="PS00962">
    <property type="entry name" value="RIBOSOMAL_S2_1"/>
    <property type="match status" value="1"/>
</dbReference>
<sequence>MSLMKEMLSAGVHFGHKKAFWNPQMKEYIFGINHGVHIINLEKTVPLFQDAVNFVGKTVANGGKVLFVGTKRQAQDIIEAEAKRCGMPFVSHRWLGGMLTNYKTVRQSIKRLAQLEKMKEDGTFESLTKKEMLQNIRTIEKLEKVLGGIKEMGGLPDAIVVIDSNKEHIAIQEAQKLGIKVVSIVDTNSNPEGIDYIIPGNDDAVKSISFYMKKFADAVIDAQGLDRAVEAKAEETTEA</sequence>
<reference key="1">
    <citation type="submission" date="2007-12" db="EMBL/GenBank/DDBJ databases">
        <title>Complete sequence of chromosome of Francisella philomiragia subsp. philomiragia ATCC 25017.</title>
        <authorList>
            <consortium name="US DOE Joint Genome Institute"/>
            <person name="Copeland A."/>
            <person name="Lucas S."/>
            <person name="Lapidus A."/>
            <person name="Barry K."/>
            <person name="Detter J.C."/>
            <person name="Glavina del Rio T."/>
            <person name="Hammon N."/>
            <person name="Israni S."/>
            <person name="Dalin E."/>
            <person name="Tice H."/>
            <person name="Pitluck S."/>
            <person name="Chain P."/>
            <person name="Malfatti S."/>
            <person name="Shin M."/>
            <person name="Vergez L."/>
            <person name="Schmutz J."/>
            <person name="Larimer F."/>
            <person name="Land M."/>
            <person name="Hauser L."/>
            <person name="Richardson P."/>
        </authorList>
    </citation>
    <scope>NUCLEOTIDE SEQUENCE [LARGE SCALE GENOMIC DNA]</scope>
    <source>
        <strain>ATCC 25017 / CCUG 19701 / FSC 153 / O#319-036</strain>
    </source>
</reference>
<gene>
    <name evidence="1" type="primary">rpsB</name>
    <name type="ordered locus">Fphi_0598</name>
</gene>
<keyword id="KW-0687">Ribonucleoprotein</keyword>
<keyword id="KW-0689">Ribosomal protein</keyword>
<accession>B0U101</accession>
<feature type="chain" id="PRO_0000351991" description="Small ribosomal subunit protein uS2">
    <location>
        <begin position="1"/>
        <end position="239"/>
    </location>
</feature>
<proteinExistence type="inferred from homology"/>
<organism>
    <name type="scientific">Francisella philomiragia subsp. philomiragia (strain ATCC 25017 / CCUG 19701 / FSC 153 / O#319-036)</name>
    <dbReference type="NCBI Taxonomy" id="484022"/>
    <lineage>
        <taxon>Bacteria</taxon>
        <taxon>Pseudomonadati</taxon>
        <taxon>Pseudomonadota</taxon>
        <taxon>Gammaproteobacteria</taxon>
        <taxon>Thiotrichales</taxon>
        <taxon>Francisellaceae</taxon>
        <taxon>Francisella</taxon>
    </lineage>
</organism>
<evidence type="ECO:0000255" key="1">
    <source>
        <dbReference type="HAMAP-Rule" id="MF_00291"/>
    </source>
</evidence>
<evidence type="ECO:0000305" key="2"/>
<name>RS2_FRAP2</name>
<comment type="similarity">
    <text evidence="1">Belongs to the universal ribosomal protein uS2 family.</text>
</comment>
<comment type="sequence caution" evidence="2">
    <conflict type="erroneous initiation">
        <sequence resource="EMBL-CDS" id="ABZ86817"/>
    </conflict>
</comment>